<proteinExistence type="inferred from homology"/>
<name>RS18_FLAJ1</name>
<feature type="chain" id="PRO_0000345467" description="Small ribosomal subunit protein bS18">
    <location>
        <begin position="1"/>
        <end position="98"/>
    </location>
</feature>
<accession>A5FE76</accession>
<sequence>MSTIEQSAKGKKDGDIRYLTPLNIETNKTKKYCRFKKSGIKYIDYKDADFLLKFVNEQGKILPRRLTGTSLKYQRKVSVAVKRARHLALMPYVADLLK</sequence>
<evidence type="ECO:0000255" key="1">
    <source>
        <dbReference type="HAMAP-Rule" id="MF_00270"/>
    </source>
</evidence>
<evidence type="ECO:0000305" key="2"/>
<comment type="function">
    <text evidence="1">Binds as a heterodimer with protein bS6 to the central domain of the 16S rRNA, where it helps stabilize the platform of the 30S subunit.</text>
</comment>
<comment type="subunit">
    <text evidence="1">Part of the 30S ribosomal subunit. Forms a tight heterodimer with protein bS6.</text>
</comment>
<comment type="similarity">
    <text evidence="1">Belongs to the bacterial ribosomal protein bS18 family.</text>
</comment>
<protein>
    <recommendedName>
        <fullName evidence="1">Small ribosomal subunit protein bS18</fullName>
    </recommendedName>
    <alternativeName>
        <fullName evidence="2">30S ribosomal protein S18</fullName>
    </alternativeName>
</protein>
<organism>
    <name type="scientific">Flavobacterium johnsoniae (strain ATCC 17061 / DSM 2064 / JCM 8514 / BCRC 14874 / CCUG 350202 / NBRC 14942 / NCIMB 11054 / UW101)</name>
    <name type="common">Cytophaga johnsonae</name>
    <dbReference type="NCBI Taxonomy" id="376686"/>
    <lineage>
        <taxon>Bacteria</taxon>
        <taxon>Pseudomonadati</taxon>
        <taxon>Bacteroidota</taxon>
        <taxon>Flavobacteriia</taxon>
        <taxon>Flavobacteriales</taxon>
        <taxon>Flavobacteriaceae</taxon>
        <taxon>Flavobacterium</taxon>
    </lineage>
</organism>
<reference key="1">
    <citation type="journal article" date="2009" name="Appl. Environ. Microbiol.">
        <title>Novel features of the polysaccharide-digesting gliding bacterium Flavobacterium johnsoniae as revealed by genome sequence analysis.</title>
        <authorList>
            <person name="McBride M.J."/>
            <person name="Xie G."/>
            <person name="Martens E.C."/>
            <person name="Lapidus A."/>
            <person name="Henrissat B."/>
            <person name="Rhodes R.G."/>
            <person name="Goltsman E."/>
            <person name="Wang W."/>
            <person name="Xu J."/>
            <person name="Hunnicutt D.W."/>
            <person name="Staroscik A.M."/>
            <person name="Hoover T.R."/>
            <person name="Cheng Y.Q."/>
            <person name="Stein J.L."/>
        </authorList>
    </citation>
    <scope>NUCLEOTIDE SEQUENCE [LARGE SCALE GENOMIC DNA]</scope>
    <source>
        <strain>ATCC 17061 / DSM 2064 / JCM 8514 / BCRC 14874 / CCUG 350202 / NBRC 14942 / NCIMB 11054 / UW101</strain>
    </source>
</reference>
<dbReference type="EMBL" id="CP000685">
    <property type="protein sequence ID" value="ABQ06495.1"/>
    <property type="molecule type" value="Genomic_DNA"/>
</dbReference>
<dbReference type="RefSeq" id="WP_002987043.1">
    <property type="nucleotide sequence ID" value="NZ_MUGZ01000010.1"/>
</dbReference>
<dbReference type="SMR" id="A5FE76"/>
<dbReference type="STRING" id="376686.Fjoh_3481"/>
<dbReference type="GeneID" id="93528689"/>
<dbReference type="KEGG" id="fjo:Fjoh_3481"/>
<dbReference type="eggNOG" id="COG0238">
    <property type="taxonomic scope" value="Bacteria"/>
</dbReference>
<dbReference type="HOGENOM" id="CLU_148710_2_0_10"/>
<dbReference type="OrthoDB" id="9812008at2"/>
<dbReference type="Proteomes" id="UP000006694">
    <property type="component" value="Chromosome"/>
</dbReference>
<dbReference type="GO" id="GO:0022627">
    <property type="term" value="C:cytosolic small ribosomal subunit"/>
    <property type="evidence" value="ECO:0007669"/>
    <property type="project" value="TreeGrafter"/>
</dbReference>
<dbReference type="GO" id="GO:0070181">
    <property type="term" value="F:small ribosomal subunit rRNA binding"/>
    <property type="evidence" value="ECO:0007669"/>
    <property type="project" value="TreeGrafter"/>
</dbReference>
<dbReference type="GO" id="GO:0003735">
    <property type="term" value="F:structural constituent of ribosome"/>
    <property type="evidence" value="ECO:0007669"/>
    <property type="project" value="InterPro"/>
</dbReference>
<dbReference type="GO" id="GO:0006412">
    <property type="term" value="P:translation"/>
    <property type="evidence" value="ECO:0007669"/>
    <property type="project" value="UniProtKB-UniRule"/>
</dbReference>
<dbReference type="FunFam" id="4.10.640.10:FF:000004">
    <property type="entry name" value="30S ribosomal protein S18"/>
    <property type="match status" value="1"/>
</dbReference>
<dbReference type="Gene3D" id="4.10.640.10">
    <property type="entry name" value="Ribosomal protein S18"/>
    <property type="match status" value="1"/>
</dbReference>
<dbReference type="HAMAP" id="MF_00270">
    <property type="entry name" value="Ribosomal_bS18"/>
    <property type="match status" value="1"/>
</dbReference>
<dbReference type="InterPro" id="IPR001648">
    <property type="entry name" value="Ribosomal_bS18"/>
</dbReference>
<dbReference type="InterPro" id="IPR036870">
    <property type="entry name" value="Ribosomal_bS18_sf"/>
</dbReference>
<dbReference type="NCBIfam" id="TIGR00165">
    <property type="entry name" value="S18"/>
    <property type="match status" value="1"/>
</dbReference>
<dbReference type="PANTHER" id="PTHR13479">
    <property type="entry name" value="30S RIBOSOMAL PROTEIN S18"/>
    <property type="match status" value="1"/>
</dbReference>
<dbReference type="PANTHER" id="PTHR13479:SF40">
    <property type="entry name" value="SMALL RIBOSOMAL SUBUNIT PROTEIN BS18M"/>
    <property type="match status" value="1"/>
</dbReference>
<dbReference type="Pfam" id="PF01084">
    <property type="entry name" value="Ribosomal_S18"/>
    <property type="match status" value="1"/>
</dbReference>
<dbReference type="PRINTS" id="PR00974">
    <property type="entry name" value="RIBOSOMALS18"/>
</dbReference>
<dbReference type="SUPFAM" id="SSF46911">
    <property type="entry name" value="Ribosomal protein S18"/>
    <property type="match status" value="1"/>
</dbReference>
<gene>
    <name evidence="1" type="primary">rpsR</name>
    <name type="ordered locus">Fjoh_3481</name>
</gene>
<keyword id="KW-0687">Ribonucleoprotein</keyword>
<keyword id="KW-0689">Ribosomal protein</keyword>
<keyword id="KW-0694">RNA-binding</keyword>
<keyword id="KW-0699">rRNA-binding</keyword>